<proteinExistence type="evidence at protein level"/>
<name>PSBT_THEVB</name>
<dbReference type="EMBL" id="AB052566">
    <property type="protein sequence ID" value="BAB19262.1"/>
    <property type="molecule type" value="Genomic_DNA"/>
</dbReference>
<dbReference type="EMBL" id="BA000039">
    <property type="protein sequence ID" value="BAC09083.1"/>
    <property type="molecule type" value="Genomic_DNA"/>
</dbReference>
<dbReference type="RefSeq" id="NP_682321.1">
    <property type="nucleotide sequence ID" value="NC_004113.1"/>
</dbReference>
<dbReference type="RefSeq" id="WP_011057371.1">
    <property type="nucleotide sequence ID" value="NC_004113.1"/>
</dbReference>
<dbReference type="PDB" id="1S5L">
    <property type="method" value="X-ray"/>
    <property type="resolution" value="3.50 A"/>
    <property type="chains" value="T/t=1-32"/>
</dbReference>
<dbReference type="PDB" id="2AXT">
    <property type="method" value="X-ray"/>
    <property type="resolution" value="3.00 A"/>
    <property type="chains" value="T/t=1-32"/>
</dbReference>
<dbReference type="PDB" id="3KZI">
    <property type="method" value="X-ray"/>
    <property type="resolution" value="3.60 A"/>
    <property type="chains" value="T=1-32"/>
</dbReference>
<dbReference type="PDB" id="4FBY">
    <property type="method" value="X-ray"/>
    <property type="resolution" value="6.56 A"/>
    <property type="chains" value="T/g=1-32"/>
</dbReference>
<dbReference type="PDB" id="4IXQ">
    <property type="method" value="X-ray"/>
    <property type="resolution" value="5.70 A"/>
    <property type="chains" value="T/t=1-32"/>
</dbReference>
<dbReference type="PDB" id="4IXR">
    <property type="method" value="X-ray"/>
    <property type="resolution" value="5.90 A"/>
    <property type="chains" value="T/t=1-32"/>
</dbReference>
<dbReference type="PDB" id="4PBU">
    <property type="method" value="X-ray"/>
    <property type="resolution" value="5.00 A"/>
    <property type="chains" value="T/t=1-30"/>
</dbReference>
<dbReference type="PDB" id="4PJ0">
    <property type="method" value="X-ray"/>
    <property type="resolution" value="2.44 A"/>
    <property type="chains" value="T/t=1-32"/>
</dbReference>
<dbReference type="PDB" id="4RVY">
    <property type="method" value="X-ray"/>
    <property type="resolution" value="5.50 A"/>
    <property type="chains" value="T/t=1-30"/>
</dbReference>
<dbReference type="PDB" id="4TNH">
    <property type="method" value="X-ray"/>
    <property type="resolution" value="4.90 A"/>
    <property type="chains" value="T/t=1-32"/>
</dbReference>
<dbReference type="PDB" id="4TNI">
    <property type="method" value="X-ray"/>
    <property type="resolution" value="4.60 A"/>
    <property type="chains" value="T/t=1-32"/>
</dbReference>
<dbReference type="PDB" id="4TNJ">
    <property type="method" value="X-ray"/>
    <property type="resolution" value="4.50 A"/>
    <property type="chains" value="T/t=1-32"/>
</dbReference>
<dbReference type="PDB" id="4TNK">
    <property type="method" value="X-ray"/>
    <property type="resolution" value="5.20 A"/>
    <property type="chains" value="T/t=1-32"/>
</dbReference>
<dbReference type="PDB" id="4V62">
    <property type="method" value="X-ray"/>
    <property type="resolution" value="2.90 A"/>
    <property type="chains" value="AT/BT=1-32"/>
</dbReference>
<dbReference type="PDB" id="4V82">
    <property type="method" value="X-ray"/>
    <property type="resolution" value="3.20 A"/>
    <property type="chains" value="AT/BT=1-32"/>
</dbReference>
<dbReference type="PDB" id="5E79">
    <property type="method" value="X-ray"/>
    <property type="resolution" value="3.50 A"/>
    <property type="chains" value="T/t=1-30"/>
</dbReference>
<dbReference type="PDB" id="5E7C">
    <property type="method" value="X-ray"/>
    <property type="resolution" value="4.50 A"/>
    <property type="chains" value="T/t=1-30"/>
</dbReference>
<dbReference type="PDB" id="5H2F">
    <property type="method" value="X-ray"/>
    <property type="resolution" value="2.20 A"/>
    <property type="chains" value="T/t=1-30"/>
</dbReference>
<dbReference type="PDB" id="5KAF">
    <property type="method" value="X-ray"/>
    <property type="resolution" value="3.00 A"/>
    <property type="chains" value="T/t=2-32"/>
</dbReference>
<dbReference type="PDB" id="5KAI">
    <property type="method" value="X-ray"/>
    <property type="resolution" value="2.80 A"/>
    <property type="chains" value="T/t=2-32"/>
</dbReference>
<dbReference type="PDB" id="5MX2">
    <property type="method" value="X-ray"/>
    <property type="resolution" value="2.20 A"/>
    <property type="chains" value="T/t=1-32"/>
</dbReference>
<dbReference type="PDB" id="5TIS">
    <property type="method" value="X-ray"/>
    <property type="resolution" value="2.25 A"/>
    <property type="chains" value="T/t=1-32"/>
</dbReference>
<dbReference type="PDB" id="5ZZN">
    <property type="method" value="X-ray"/>
    <property type="resolution" value="2.10 A"/>
    <property type="chains" value="T/t=1-30"/>
</dbReference>
<dbReference type="PDB" id="6DHE">
    <property type="method" value="X-ray"/>
    <property type="resolution" value="2.05 A"/>
    <property type="chains" value="T/t=1-30"/>
</dbReference>
<dbReference type="PDB" id="6DHF">
    <property type="method" value="X-ray"/>
    <property type="resolution" value="2.08 A"/>
    <property type="chains" value="T/t=1-30"/>
</dbReference>
<dbReference type="PDB" id="6DHG">
    <property type="method" value="X-ray"/>
    <property type="resolution" value="2.50 A"/>
    <property type="chains" value="T/t=1-30"/>
</dbReference>
<dbReference type="PDB" id="6DHH">
    <property type="method" value="X-ray"/>
    <property type="resolution" value="2.20 A"/>
    <property type="chains" value="T/t=1-30"/>
</dbReference>
<dbReference type="PDB" id="6DHO">
    <property type="method" value="X-ray"/>
    <property type="resolution" value="2.07 A"/>
    <property type="chains" value="T/t=1-30"/>
</dbReference>
<dbReference type="PDB" id="6DHP">
    <property type="method" value="X-ray"/>
    <property type="resolution" value="2.04 A"/>
    <property type="chains" value="T/t=1-30"/>
</dbReference>
<dbReference type="PDB" id="6W1O">
    <property type="method" value="X-ray"/>
    <property type="resolution" value="2.08 A"/>
    <property type="chains" value="T/t=1-30"/>
</dbReference>
<dbReference type="PDB" id="6W1P">
    <property type="method" value="X-ray"/>
    <property type="resolution" value="2.26 A"/>
    <property type="chains" value="T/t=1-30"/>
</dbReference>
<dbReference type="PDB" id="6W1Q">
    <property type="method" value="X-ray"/>
    <property type="resolution" value="2.27 A"/>
    <property type="chains" value="T/t=1-30"/>
</dbReference>
<dbReference type="PDB" id="6W1R">
    <property type="method" value="X-ray"/>
    <property type="resolution" value="2.23 A"/>
    <property type="chains" value="T/t=1-32"/>
</dbReference>
<dbReference type="PDB" id="6W1T">
    <property type="method" value="X-ray"/>
    <property type="resolution" value="2.01 A"/>
    <property type="chains" value="T/t=1-30"/>
</dbReference>
<dbReference type="PDB" id="6W1U">
    <property type="method" value="X-ray"/>
    <property type="resolution" value="2.09 A"/>
    <property type="chains" value="T/t=1-32"/>
</dbReference>
<dbReference type="PDB" id="6W1V">
    <property type="method" value="X-ray"/>
    <property type="resolution" value="2.09 A"/>
    <property type="chains" value="T/t=1-32"/>
</dbReference>
<dbReference type="PDB" id="7NHO">
    <property type="method" value="EM"/>
    <property type="resolution" value="2.66 A"/>
    <property type="chains" value="T=1-32"/>
</dbReference>
<dbReference type="PDB" id="7NHP">
    <property type="method" value="EM"/>
    <property type="resolution" value="2.72 A"/>
    <property type="chains" value="T=1-32"/>
</dbReference>
<dbReference type="PDB" id="7NHQ">
    <property type="method" value="EM"/>
    <property type="resolution" value="2.68 A"/>
    <property type="chains" value="T=1-32"/>
</dbReference>
<dbReference type="PDB" id="7RF1">
    <property type="method" value="X-ray"/>
    <property type="resolution" value="1.89 A"/>
    <property type="chains" value="T/t=1-32"/>
</dbReference>
<dbReference type="PDB" id="7RF2">
    <property type="method" value="X-ray"/>
    <property type="resolution" value="2.08 A"/>
    <property type="chains" value="T/t=1-32"/>
</dbReference>
<dbReference type="PDB" id="7RF3">
    <property type="method" value="X-ray"/>
    <property type="resolution" value="2.26 A"/>
    <property type="chains" value="T/t=1-32"/>
</dbReference>
<dbReference type="PDB" id="7RF4">
    <property type="method" value="X-ray"/>
    <property type="resolution" value="2.27 A"/>
    <property type="chains" value="T/t=1-32"/>
</dbReference>
<dbReference type="PDB" id="7RF5">
    <property type="method" value="X-ray"/>
    <property type="resolution" value="2.23 A"/>
    <property type="chains" value="T/t=1-32"/>
</dbReference>
<dbReference type="PDB" id="7RF6">
    <property type="method" value="X-ray"/>
    <property type="resolution" value="2.01 A"/>
    <property type="chains" value="T/t=1-32"/>
</dbReference>
<dbReference type="PDB" id="7RF7">
    <property type="method" value="X-ray"/>
    <property type="resolution" value="2.09 A"/>
    <property type="chains" value="T/t=1-32"/>
</dbReference>
<dbReference type="PDB" id="7RF8">
    <property type="method" value="X-ray"/>
    <property type="resolution" value="2.09 A"/>
    <property type="chains" value="T/t=1-32"/>
</dbReference>
<dbReference type="PDB" id="7YQ2">
    <property type="method" value="X-ray"/>
    <property type="resolution" value="1.90 A"/>
    <property type="chains" value="T/t=1-32"/>
</dbReference>
<dbReference type="PDB" id="7YQ7">
    <property type="method" value="X-ray"/>
    <property type="resolution" value="1.90 A"/>
    <property type="chains" value="T/t=1-32"/>
</dbReference>
<dbReference type="PDB" id="8EZ5">
    <property type="method" value="X-ray"/>
    <property type="resolution" value="2.09 A"/>
    <property type="chains" value="T/t=1-32"/>
</dbReference>
<dbReference type="PDB" id="8F4C">
    <property type="method" value="X-ray"/>
    <property type="resolution" value="2.00 A"/>
    <property type="chains" value="T/t=1-32"/>
</dbReference>
<dbReference type="PDB" id="8F4D">
    <property type="method" value="X-ray"/>
    <property type="resolution" value="2.15 A"/>
    <property type="chains" value="T/t=1-32"/>
</dbReference>
<dbReference type="PDB" id="8F4E">
    <property type="method" value="X-ray"/>
    <property type="resolution" value="2.09 A"/>
    <property type="chains" value="T/t=1-32"/>
</dbReference>
<dbReference type="PDB" id="8F4F">
    <property type="method" value="X-ray"/>
    <property type="resolution" value="2.03 A"/>
    <property type="chains" value="T/t=1-32"/>
</dbReference>
<dbReference type="PDB" id="8F4G">
    <property type="method" value="X-ray"/>
    <property type="resolution" value="2.03 A"/>
    <property type="chains" value="T/t=1-32"/>
</dbReference>
<dbReference type="PDB" id="8F4H">
    <property type="method" value="X-ray"/>
    <property type="resolution" value="2.10 A"/>
    <property type="chains" value="T/t=1-32"/>
</dbReference>
<dbReference type="PDB" id="8F4I">
    <property type="method" value="X-ray"/>
    <property type="resolution" value="2.00 A"/>
    <property type="chains" value="T/t=1-32"/>
</dbReference>
<dbReference type="PDB" id="8F4J">
    <property type="method" value="X-ray"/>
    <property type="resolution" value="2.00 A"/>
    <property type="chains" value="T/t=1-32"/>
</dbReference>
<dbReference type="PDB" id="8F4K">
    <property type="method" value="X-ray"/>
    <property type="resolution" value="2.16 A"/>
    <property type="chains" value="T/t=1-32"/>
</dbReference>
<dbReference type="PDB" id="9EVX">
    <property type="method" value="EM"/>
    <property type="resolution" value="1.71 A"/>
    <property type="chains" value="T/t=1-32"/>
</dbReference>
<dbReference type="PDBsum" id="1S5L"/>
<dbReference type="PDBsum" id="2AXT"/>
<dbReference type="PDBsum" id="3KZI"/>
<dbReference type="PDBsum" id="4FBY"/>
<dbReference type="PDBsum" id="4IXQ"/>
<dbReference type="PDBsum" id="4IXR"/>
<dbReference type="PDBsum" id="4PBU"/>
<dbReference type="PDBsum" id="4PJ0"/>
<dbReference type="PDBsum" id="4RVY"/>
<dbReference type="PDBsum" id="4TNH"/>
<dbReference type="PDBsum" id="4TNI"/>
<dbReference type="PDBsum" id="4TNJ"/>
<dbReference type="PDBsum" id="4TNK"/>
<dbReference type="PDBsum" id="4V62"/>
<dbReference type="PDBsum" id="4V82"/>
<dbReference type="PDBsum" id="5E79"/>
<dbReference type="PDBsum" id="5E7C"/>
<dbReference type="PDBsum" id="5H2F"/>
<dbReference type="PDBsum" id="5KAF"/>
<dbReference type="PDBsum" id="5KAI"/>
<dbReference type="PDBsum" id="5MX2"/>
<dbReference type="PDBsum" id="5TIS"/>
<dbReference type="PDBsum" id="5ZZN"/>
<dbReference type="PDBsum" id="6DHE"/>
<dbReference type="PDBsum" id="6DHF"/>
<dbReference type="PDBsum" id="6DHG"/>
<dbReference type="PDBsum" id="6DHH"/>
<dbReference type="PDBsum" id="6DHO"/>
<dbReference type="PDBsum" id="6DHP"/>
<dbReference type="PDBsum" id="6W1O"/>
<dbReference type="PDBsum" id="6W1P"/>
<dbReference type="PDBsum" id="6W1Q"/>
<dbReference type="PDBsum" id="6W1R"/>
<dbReference type="PDBsum" id="6W1T"/>
<dbReference type="PDBsum" id="6W1U"/>
<dbReference type="PDBsum" id="6W1V"/>
<dbReference type="PDBsum" id="7NHO"/>
<dbReference type="PDBsum" id="7NHP"/>
<dbReference type="PDBsum" id="7NHQ"/>
<dbReference type="PDBsum" id="7RF1"/>
<dbReference type="PDBsum" id="7RF2"/>
<dbReference type="PDBsum" id="7RF3"/>
<dbReference type="PDBsum" id="7RF4"/>
<dbReference type="PDBsum" id="7RF5"/>
<dbReference type="PDBsum" id="7RF6"/>
<dbReference type="PDBsum" id="7RF7"/>
<dbReference type="PDBsum" id="7RF8"/>
<dbReference type="PDBsum" id="7YQ2"/>
<dbReference type="PDBsum" id="7YQ7"/>
<dbReference type="PDBsum" id="8EZ5"/>
<dbReference type="PDBsum" id="8F4C"/>
<dbReference type="PDBsum" id="8F4D"/>
<dbReference type="PDBsum" id="8F4E"/>
<dbReference type="PDBsum" id="8F4F"/>
<dbReference type="PDBsum" id="8F4G"/>
<dbReference type="PDBsum" id="8F4H"/>
<dbReference type="PDBsum" id="8F4I"/>
<dbReference type="PDBsum" id="8F4J"/>
<dbReference type="PDBsum" id="8F4K"/>
<dbReference type="PDBsum" id="9EVX"/>
<dbReference type="EMDB" id="EMD-12335"/>
<dbReference type="EMDB" id="EMD-12336"/>
<dbReference type="EMDB" id="EMD-12337"/>
<dbReference type="EMDB" id="EMD-50019"/>
<dbReference type="SMR" id="Q8DIQ0"/>
<dbReference type="DIP" id="DIP-48500N"/>
<dbReference type="IntAct" id="Q8DIQ0">
    <property type="interactions" value="1"/>
</dbReference>
<dbReference type="STRING" id="197221.gene:10748131"/>
<dbReference type="EnsemblBacteria" id="BAC09083">
    <property type="protein sequence ID" value="BAC09083"/>
    <property type="gene ID" value="BAC09083"/>
</dbReference>
<dbReference type="KEGG" id="tel:tsr1531"/>
<dbReference type="eggNOG" id="ENOG502ZXRT">
    <property type="taxonomic scope" value="Bacteria"/>
</dbReference>
<dbReference type="EvolutionaryTrace" id="Q8DIQ0"/>
<dbReference type="Proteomes" id="UP000000440">
    <property type="component" value="Chromosome"/>
</dbReference>
<dbReference type="GO" id="GO:0009539">
    <property type="term" value="C:photosystem II reaction center"/>
    <property type="evidence" value="ECO:0007669"/>
    <property type="project" value="InterPro"/>
</dbReference>
<dbReference type="GO" id="GO:0031676">
    <property type="term" value="C:plasma membrane-derived thylakoid membrane"/>
    <property type="evidence" value="ECO:0007669"/>
    <property type="project" value="UniProtKB-SubCell"/>
</dbReference>
<dbReference type="GO" id="GO:0015979">
    <property type="term" value="P:photosynthesis"/>
    <property type="evidence" value="ECO:0007669"/>
    <property type="project" value="UniProtKB-UniRule"/>
</dbReference>
<dbReference type="HAMAP" id="MF_00808">
    <property type="entry name" value="PSII_PsbT"/>
    <property type="match status" value="1"/>
</dbReference>
<dbReference type="InterPro" id="IPR001743">
    <property type="entry name" value="PSII_PsbT"/>
</dbReference>
<dbReference type="InterPro" id="IPR037268">
    <property type="entry name" value="PSII_PsbT_sf"/>
</dbReference>
<dbReference type="Pfam" id="PF01405">
    <property type="entry name" value="PsbT"/>
    <property type="match status" value="1"/>
</dbReference>
<dbReference type="SUPFAM" id="SSF161029">
    <property type="entry name" value="Photosystem II reaction center protein T, PsbT"/>
    <property type="match status" value="1"/>
</dbReference>
<protein>
    <recommendedName>
        <fullName evidence="1">Photosystem II reaction center protein T</fullName>
        <shortName evidence="1">PSII-T</shortName>
        <shortName evidence="15">PSII-Tc</shortName>
    </recommendedName>
</protein>
<reference key="1">
    <citation type="journal article" date="2004" name="Plant Cell Physiol.">
        <title>PSII-Tc protein plays an important role in dimerization of photosystem II.</title>
        <authorList>
            <person name="Iwai M."/>
            <person name="Katoh H."/>
            <person name="Katayama M."/>
            <person name="Ikeuchi M."/>
        </authorList>
    </citation>
    <scope>NUCLEOTIDE SEQUENCE [GENOMIC DNA]</scope>
    <scope>FUNCTION</scope>
    <scope>DISRUPTION PHENOTYPE</scope>
</reference>
<reference key="2">
    <citation type="journal article" date="2002" name="DNA Res.">
        <title>Complete genome structure of the thermophilic cyanobacterium Thermosynechococcus elongatus BP-1.</title>
        <authorList>
            <person name="Nakamura Y."/>
            <person name="Kaneko T."/>
            <person name="Sato S."/>
            <person name="Ikeuchi M."/>
            <person name="Katoh H."/>
            <person name="Sasamoto S."/>
            <person name="Watanabe A."/>
            <person name="Iriguchi M."/>
            <person name="Kawashima K."/>
            <person name="Kimura T."/>
            <person name="Kishida Y."/>
            <person name="Kiyokawa C."/>
            <person name="Kohara M."/>
            <person name="Matsumoto M."/>
            <person name="Matsuno A."/>
            <person name="Nakazaki N."/>
            <person name="Shimpo S."/>
            <person name="Sugimoto M."/>
            <person name="Takeuchi C."/>
            <person name="Yamada M."/>
            <person name="Tabata S."/>
        </authorList>
    </citation>
    <scope>NUCLEOTIDE SEQUENCE [LARGE SCALE GENOMIC DNA]</scope>
    <source>
        <strain>NIES-2133 / IAM M-273 / BP-1</strain>
    </source>
</reference>
<reference key="3">
    <citation type="journal article" date="2007" name="Biochim. Biophys. Acta">
        <title>Ycf12 is a core subunit in the photosystem II complex.</title>
        <authorList>
            <person name="Kashino Y."/>
            <person name="Takahashi T."/>
            <person name="Inoue-Kashino N."/>
            <person name="Ban A."/>
            <person name="Ikeda Y."/>
            <person name="Satoh K."/>
            <person name="Sugiura M."/>
        </authorList>
    </citation>
    <scope>PROTEIN SEQUENCE OF 1-15</scope>
    <scope>COFACTOR</scope>
    <scope>SUBCELLULAR LOCATION</scope>
</reference>
<reference key="4">
    <citation type="journal article" date="2007" name="Plant Cell Physiol.">
        <title>Absence of the PsbZ subunit prevents association of PsbK and Ycf12 with the PSII complex in the thermophilic cyanobacterium Thermosynechococcus elongatus BP-1.</title>
        <authorList>
            <person name="Iwai M."/>
            <person name="Suzuki T."/>
            <person name="Dohmae N."/>
            <person name="Inoue Y."/>
            <person name="Ikeuchi M."/>
        </authorList>
    </citation>
    <scope>PROTEIN SEQUENCE OF 1-9</scope>
    <scope>COFACTOR</scope>
    <scope>SUBCELLULAR LOCATION</scope>
</reference>
<reference key="5">
    <citation type="journal article" date="2004" name="Science">
        <title>Architecture of the photosynthetic oxygen-evolving center.</title>
        <authorList>
            <person name="Ferreira K.N."/>
            <person name="Iverson T.M."/>
            <person name="Maghlaoui K."/>
            <person name="Barber J."/>
            <person name="Iwata S."/>
        </authorList>
    </citation>
    <scope>X-RAY CRYSTALLOGRAPHY (3.5 ANGSTROMS) IN PHOTOSYSTEM II</scope>
    <scope>COFACTOR</scope>
    <scope>SUBUNIT</scope>
    <scope>SUBCELLULAR LOCATION</scope>
</reference>
<reference key="6">
    <citation type="journal article" date="2005" name="Nature">
        <title>Towards complete cofactor arrangement in the 3.0 A resolution structure of photosystem II.</title>
        <authorList>
            <person name="Loll B."/>
            <person name="Kern J."/>
            <person name="Saenger W."/>
            <person name="Zouni A."/>
            <person name="Biesiadka J."/>
        </authorList>
    </citation>
    <scope>X-RAY CRYSTALLOGRAPHY (3.00 ANGSTROMS) IN PHOTOSYSTEM II</scope>
    <scope>COFACTOR</scope>
    <scope>SUBUNIT</scope>
    <scope>SUBCELLULAR LOCATION</scope>
    <source>
        <strain>NIES-2133 / IAM M-273 / BP-1</strain>
    </source>
</reference>
<reference key="7">
    <citation type="journal article" date="2009" name="Nat. Struct. Mol. Biol.">
        <title>Cyanobacterial photosystem II at 2.9-A resolution and the role of quinones, lipids, channels and chloride.</title>
        <authorList>
            <person name="Guskov A."/>
            <person name="Kern J."/>
            <person name="Gabdulkhakov A."/>
            <person name="Broser M."/>
            <person name="Zouni A."/>
            <person name="Saenger W."/>
        </authorList>
    </citation>
    <scope>X-RAY CRYSTALLOGRAPHY (2.90 ANGSTROMS) IN PHOTOSYSTEM II</scope>
    <scope>COFACTOR</scope>
    <scope>SUBUNIT</scope>
    <scope>SUBCELLULAR LOCATION</scope>
    <scope>FORMYLATION AT MET-1</scope>
    <scope>MASS SPECTROMETRY</scope>
    <scope>TOPOLOGY</scope>
    <source>
        <strain>NIES-2133 / IAM M-273 / BP-1</strain>
    </source>
</reference>
<reference key="8">
    <citation type="journal article" date="2010" name="J. Biol. Chem.">
        <title>Crystal structure of monomeric photosystem II from Thermosynechococcus elongatus at 3.6 A resolution.</title>
        <authorList>
            <person name="Broser M."/>
            <person name="Gabdulkhakov A."/>
            <person name="Kern J."/>
            <person name="Guskov A."/>
            <person name="Muh F."/>
            <person name="Saenger W."/>
            <person name="Zouni A."/>
        </authorList>
    </citation>
    <scope>X-RAY CRYSTALLOGRAPHY (3.60 ANGSTROMS) IN PHOTOSYSTEM II</scope>
    <scope>FUNCTION</scope>
    <scope>COFACTOR</scope>
    <scope>SUBUNIT</scope>
    <scope>SUBCELLULAR LOCATION</scope>
    <scope>FORMYLATION AT MET-1</scope>
    <scope>MASS SPECTROMETRY</scope>
    <source>
        <strain>NIES-2133 / IAM M-273 / BP-1</strain>
    </source>
</reference>
<reference key="9">
    <citation type="journal article" date="2011" name="J. Biol. Chem.">
        <title>Structural basis of cyanobacterial photosystem II inhibition by the herbicide terbutryn.</title>
        <authorList>
            <person name="Broser M."/>
            <person name="Glockner C."/>
            <person name="Gabdulkhakov A."/>
            <person name="Guskov A."/>
            <person name="Buchta J."/>
            <person name="Kern J."/>
            <person name="Muh F."/>
            <person name="Dau H."/>
            <person name="Saenger W."/>
            <person name="Zouni A."/>
        </authorList>
    </citation>
    <scope>X-RAY CRYSTALLOGRAPHY (3.20 ANGSTROMS) IN PHOTOSYSTEM II</scope>
    <scope>FUNCTION</scope>
    <scope>COFACTOR</scope>
    <scope>SUBUNIT</scope>
    <scope>SUBCELLULAR LOCATION</scope>
</reference>
<reference key="10">
    <citation type="journal article" date="2012" name="Proc. Natl. Acad. Sci. U.S.A.">
        <title>Room temperature femtosecond X-ray diffraction of photosystem II microcrystals.</title>
        <authorList>
            <person name="Kern J."/>
            <person name="Alonso-Mori R."/>
            <person name="Hellmich J."/>
            <person name="Tran R."/>
            <person name="Hattne J."/>
            <person name="Laksmono H."/>
            <person name="Glockner C."/>
            <person name="Echols N."/>
            <person name="Sierra R.G."/>
            <person name="Sellberg J."/>
            <person name="Lassalle-Kaiser B."/>
            <person name="Gildea R.J."/>
            <person name="Glatzel P."/>
            <person name="Grosse-Kunstleve R.W."/>
            <person name="Latimer M.J."/>
            <person name="McQueen T.A."/>
            <person name="DiFiore D."/>
            <person name="Fry A.R."/>
            <person name="Messerschmidt M."/>
            <person name="Miahnahri A."/>
            <person name="Schafer D.W."/>
            <person name="Seibert M.M."/>
            <person name="Sokaras D."/>
            <person name="Weng T.C."/>
            <person name="Zwart P.H."/>
            <person name="White W.E."/>
            <person name="Adams P.D."/>
            <person name="Bogan M.J."/>
            <person name="Boutet S."/>
            <person name="Williams G.J."/>
            <person name="Messinger J."/>
            <person name="Sauter N.K."/>
            <person name="Zouni A."/>
            <person name="Bergmann U."/>
            <person name="Yano J."/>
            <person name="Yachandra V.K."/>
        </authorList>
    </citation>
    <scope>X-RAY CRYSTALLOGRAPHY (6.56 ANGSTROMS) IN PHOTOSYSTEM II</scope>
    <scope>COFACTOR</scope>
    <scope>SUBUNIT</scope>
    <scope>SUBCELLULAR LOCATION</scope>
    <source>
        <strain>NIES-2133 / IAM M-273 / BP-1</strain>
    </source>
</reference>
<reference key="11">
    <citation type="journal article" date="2013" name="Science">
        <title>Simultaneous femtosecond X-ray spectroscopy and diffraction of photosystem II at room temperature.</title>
        <authorList>
            <person name="Kern J."/>
            <person name="Alonso-Mori R."/>
            <person name="Tran R."/>
            <person name="Hattne J."/>
            <person name="Gildea R.J."/>
            <person name="Echols N."/>
            <person name="Glockner C."/>
            <person name="Hellmich J."/>
            <person name="Laksmono H."/>
            <person name="Sierra R.G."/>
            <person name="Lassalle-Kaiser B."/>
            <person name="Koroidov S."/>
            <person name="Lampe A."/>
            <person name="Han G."/>
            <person name="Gul S."/>
            <person name="Difiore D."/>
            <person name="Milathianaki D."/>
            <person name="Fry A.R."/>
            <person name="Miahnahri A."/>
            <person name="Schafer D.W."/>
            <person name="Messerschmidt M."/>
            <person name="Seibert M.M."/>
            <person name="Koglin J.E."/>
            <person name="Sokaras D."/>
            <person name="Weng T.C."/>
            <person name="Sellberg J."/>
            <person name="Latimer M.J."/>
            <person name="Grosse-Kunstleve R.W."/>
            <person name="Zwart P.H."/>
            <person name="White W.E."/>
            <person name="Glatzel P."/>
            <person name="Adams P.D."/>
            <person name="Bogan M.J."/>
            <person name="Williams G.J."/>
            <person name="Boutet S."/>
            <person name="Messinger J."/>
            <person name="Zouni A."/>
            <person name="Sauter N.K."/>
            <person name="Yachandra V.K."/>
            <person name="Bergmann U."/>
            <person name="Yano J."/>
        </authorList>
    </citation>
    <scope>X-RAY CRYSTALLOGRAPHY (5.70 ANGSTROMS) IN PHOTOSYSTEM II</scope>
    <scope>COFACTOR</scope>
    <scope>SUBUNIT</scope>
    <scope>SUBCELLULAR LOCATION</scope>
    <source>
        <strain>NIES-2133 / IAM M-273 / BP-1</strain>
    </source>
</reference>
<reference key="12">
    <citation type="journal article" date="2014" name="Nature">
        <title>Serial time-resolved crystallography of photosystem II using a femtosecond X-ray laser.</title>
        <authorList>
            <person name="Kupitz C."/>
            <person name="Basu S."/>
            <person name="Grotjohann I."/>
            <person name="Fromme R."/>
            <person name="Zatsepin N.A."/>
            <person name="Rendek K.N."/>
            <person name="Hunter M.S."/>
            <person name="Shoeman R.L."/>
            <person name="White T.A."/>
            <person name="Wang D."/>
            <person name="James D."/>
            <person name="Yang J.H."/>
            <person name="Cobb D.E."/>
            <person name="Reeder B."/>
            <person name="Sierra R.G."/>
            <person name="Liu H."/>
            <person name="Barty A."/>
            <person name="Aquila A.L."/>
            <person name="Deponte D."/>
            <person name="Kirian R.A."/>
            <person name="Bari S."/>
            <person name="Bergkamp J.J."/>
            <person name="Beyerlein K.R."/>
            <person name="Bogan M.J."/>
            <person name="Caleman C."/>
            <person name="Chao T.C."/>
            <person name="Conrad C.E."/>
            <person name="Davis K.M."/>
            <person name="Fleckenstein H."/>
            <person name="Galli L."/>
            <person name="Hau-Riege S.P."/>
            <person name="Kassemeyer S."/>
            <person name="Laksmono H."/>
            <person name="Liang M."/>
            <person name="Lomb L."/>
            <person name="Marchesini S."/>
            <person name="Martin A.V."/>
            <person name="Messerschmidt M."/>
            <person name="Milathianaki D."/>
            <person name="Nass K."/>
            <person name="Ros A."/>
            <person name="Roy-Chowdhury S."/>
            <person name="Schmidt K."/>
            <person name="Seibert M."/>
            <person name="Steinbrener J."/>
            <person name="Stellato F."/>
            <person name="Yan L."/>
            <person name="Yoon C."/>
            <person name="Moore T.A."/>
            <person name="Moore A.L."/>
            <person name="Pushkar Y."/>
            <person name="Williams G.J."/>
            <person name="Boutet S."/>
            <person name="Doak R.B."/>
            <person name="Weierstall U."/>
            <person name="Frank M."/>
            <person name="Chapman H.N."/>
            <person name="Spence J.C."/>
            <person name="Fromme P."/>
        </authorList>
    </citation>
    <scope>X-RAY CRYSTALLOGRAPHY (5.00 ANGSTROMS) OF 1-30 IN PHOTOSYSTEM II</scope>
    <scope>COFACTOR</scope>
    <scope>SUBUNIT</scope>
    <scope>SUBCELLULAR LOCATION</scope>
    <source>
        <strain>NIES-2133 / IAM M-273 / BP-1</strain>
    </source>
</reference>
<reference key="13">
    <citation type="journal article" date="2014" name="Nat. Commun.">
        <title>Taking snapshots of photosynthetic water oxidation using femtosecond X-ray diffraction and spectroscopy.</title>
        <authorList>
            <person name="Kern J."/>
            <person name="Tran R."/>
            <person name="Alonso-Mori R."/>
            <person name="Koroidov S."/>
            <person name="Echols N."/>
            <person name="Hattne J."/>
            <person name="Ibrahim M."/>
            <person name="Gul S."/>
            <person name="Laksmono H."/>
            <person name="Sierra R.G."/>
            <person name="Gildea R.J."/>
            <person name="Han G."/>
            <person name="Hellmich J."/>
            <person name="Lassalle-Kaiser B."/>
            <person name="Chatterjee R."/>
            <person name="Brewster A.S."/>
            <person name="Stan C.A."/>
            <person name="Gloeckner C."/>
            <person name="Lampe A."/>
            <person name="DiFiore D."/>
            <person name="Milathianaki D."/>
            <person name="Fry A.R."/>
            <person name="Seibert M.M."/>
            <person name="Koglin J.E."/>
            <person name="Gallo E."/>
            <person name="Uhlig J."/>
            <person name="Sokaras D."/>
            <person name="Weng T.C."/>
            <person name="Zwart P.H."/>
            <person name="Skinner D.E."/>
            <person name="Bogan M.J."/>
            <person name="Messerschmidt M."/>
            <person name="Glatzel P."/>
            <person name="Williams G.J."/>
            <person name="Boutet S."/>
            <person name="Adams P.D."/>
            <person name="Zouni A."/>
            <person name="Messinger J."/>
            <person name="Sauter N.K."/>
            <person name="Bergmann U."/>
            <person name="Yano J."/>
            <person name="Yachandra V.K."/>
        </authorList>
    </citation>
    <scope>X-RAY CRYSTALLOGRAPHY (4.50 ANGSTROMS) IN PHOTOSYSTEM II</scope>
    <scope>FUNCTION</scope>
    <scope>COFACTOR</scope>
    <scope>SUBUNIT</scope>
    <scope>SUBCELLULAR LOCATION</scope>
    <source>
        <strain>NIES-2133 / IAM M-273 / BP-1</strain>
    </source>
</reference>
<reference evidence="16 17 18" key="14">
    <citation type="journal article" date="2021" name="Nat. Plants">
        <title>Structural insights into photosystem II assembly.</title>
        <authorList>
            <person name="Zabret J."/>
            <person name="Bohn S."/>
            <person name="Schuller S.K."/>
            <person name="Arnolds O."/>
            <person name="Moller M."/>
            <person name="Meier-Credo J."/>
            <person name="Liauw P."/>
            <person name="Chan A."/>
            <person name="Tajkhorshid E."/>
            <person name="Langer J.D."/>
            <person name="Stoll R."/>
            <person name="Krieger-Liszkay A."/>
            <person name="Engel B.D."/>
            <person name="Rudack T."/>
            <person name="Schuller J.M."/>
            <person name="Nowaczyk M.M."/>
        </authorList>
    </citation>
    <scope>STRUCTURE BY ELECTRON MICROSCOPY (2.68 ANGSTROMS) IN PSII-I ASSEMBLY COMPLEX</scope>
    <scope>SUBUNIT</scope>
    <scope>SUBCELLULAR LOCATION</scope>
    <scope>TOPOLOGY</scope>
    <source>
        <strain>NIES-2133 / IAM M-273 / BP-1</strain>
    </source>
</reference>
<gene>
    <name evidence="1" type="primary">psbT</name>
    <name type="ordered locus">tsr1531</name>
</gene>
<comment type="function">
    <text evidence="1 3 8 9 12">Found at the monomer-monomer interface of the photosystem II (PS II) dimer, plays a role in assembly and dimerization of PSII. PSII is a light-driven water plastoquinone oxidoreductase, using light energy to abstract electrons from H(2)O, generating a proton gradient subsequently used for ATP formation.</text>
</comment>
<comment type="cofactor">
    <text evidence="2 4 5 6 7 8 9 10 11 12 13">PSII binds multiple chlorophylls, carotenoids and specific lipids.</text>
</comment>
<comment type="subunit">
    <text evidence="1 2 4 7 8 9 10 11 12 13 14">PSII is composed of 1 copy each of membrane proteins PsbA, PsbB, PsbC, PsbD, PsbE, PsbF, PsbH, PsbI, PsbJ, PsbK, PsbL, PsbM, PsbT, PsbX, PsbY, PsbZ, Psb30/Ycf12, PsbO, CyanoQ (PsbQ), PsbU, PsbV and a large number of cofactors. It forms dimeric complexes (By similarity) (PubMed:14764885, PubMed:16355230, PubMed:19219048, PubMed:20558739, PubMed:21367867, PubMed:22665786, PubMed:23413188, PubMed:25006873, PubMed:25043005). Part of a photosystem II (PSII) assembly intermediate complex PSII-I; crystallized from a strain deleted of psbJ, it forms monomeric PSII before addition of the oxygen evolving complex. PSII-I includes 3 assembly factors not found in mature PSII (Psb27, Psb28 and Psb34) (PubMed:33846594).</text>
</comment>
<comment type="subcellular location">
    <subcellularLocation>
        <location evidence="1 2 4 5 6 7 8 9 10 11 12 13 14">Cellular thylakoid membrane</location>
        <topology evidence="1 2 4 5 6 7 8 9 10 11 12 13 14">Single-pass membrane protein</topology>
    </subcellularLocation>
</comment>
<comment type="mass spectrometry"/>
<comment type="mass spectrometry"/>
<comment type="disruption phenotype">
    <text evidence="3">No detectable dimeric PSII, loss of another protein that may be PsbM.</text>
</comment>
<comment type="similarity">
    <text evidence="1">Belongs to the PsbT family.</text>
</comment>
<feature type="chain" id="PRO_0000218004" description="Photosystem II reaction center protein T">
    <location>
        <begin position="1"/>
        <end position="32"/>
    </location>
</feature>
<feature type="topological domain" description="Lumenal" evidence="14 18">
    <location>
        <begin position="1"/>
        <end position="2"/>
    </location>
</feature>
<feature type="transmembrane region" description="Helical" evidence="1 14 18">
    <location>
        <begin position="3"/>
        <end position="23"/>
    </location>
</feature>
<feature type="topological domain" description="Cytoplasmic" evidence="14 18">
    <location>
        <begin position="24"/>
        <end position="32"/>
    </location>
</feature>
<feature type="modified residue" description="N-formylmethionine" evidence="7 8">
    <location>
        <position position="1"/>
    </location>
</feature>
<feature type="helix" evidence="19">
    <location>
        <begin position="2"/>
        <end position="22"/>
    </location>
</feature>
<evidence type="ECO:0000255" key="1">
    <source>
        <dbReference type="HAMAP-Rule" id="MF_00808"/>
    </source>
</evidence>
<evidence type="ECO:0000269" key="2">
    <source>
    </source>
</evidence>
<evidence type="ECO:0000269" key="3">
    <source>
    </source>
</evidence>
<evidence type="ECO:0000269" key="4">
    <source>
    </source>
</evidence>
<evidence type="ECO:0000269" key="5">
    <source>
    </source>
</evidence>
<evidence type="ECO:0000269" key="6">
    <source>
    </source>
</evidence>
<evidence type="ECO:0000269" key="7">
    <source>
    </source>
</evidence>
<evidence type="ECO:0000269" key="8">
    <source>
    </source>
</evidence>
<evidence type="ECO:0000269" key="9">
    <source>
    </source>
</evidence>
<evidence type="ECO:0000269" key="10">
    <source>
    </source>
</evidence>
<evidence type="ECO:0000269" key="11">
    <source>
    </source>
</evidence>
<evidence type="ECO:0000269" key="12">
    <source>
    </source>
</evidence>
<evidence type="ECO:0000269" key="13">
    <source>
    </source>
</evidence>
<evidence type="ECO:0000269" key="14">
    <source>
    </source>
</evidence>
<evidence type="ECO:0000303" key="15">
    <source>
    </source>
</evidence>
<evidence type="ECO:0007744" key="16">
    <source>
        <dbReference type="PDB" id="7NHO"/>
    </source>
</evidence>
<evidence type="ECO:0007744" key="17">
    <source>
        <dbReference type="PDB" id="7NHP"/>
    </source>
</evidence>
<evidence type="ECO:0007744" key="18">
    <source>
        <dbReference type="PDB" id="7NHQ"/>
    </source>
</evidence>
<evidence type="ECO:0007829" key="19">
    <source>
        <dbReference type="PDB" id="7YQ2"/>
    </source>
</evidence>
<organism>
    <name type="scientific">Thermosynechococcus vestitus (strain NIES-2133 / IAM M-273 / BP-1)</name>
    <dbReference type="NCBI Taxonomy" id="197221"/>
    <lineage>
        <taxon>Bacteria</taxon>
        <taxon>Bacillati</taxon>
        <taxon>Cyanobacteriota</taxon>
        <taxon>Cyanophyceae</taxon>
        <taxon>Acaryochloridales</taxon>
        <taxon>Thermosynechococcaceae</taxon>
        <taxon>Thermosynechococcus</taxon>
    </lineage>
</organism>
<sequence>METITYVFIFACIIALFFFAIFFREPPRITKK</sequence>
<keyword id="KW-0002">3D-structure</keyword>
<keyword id="KW-0903">Direct protein sequencing</keyword>
<keyword id="KW-0291">Formylation</keyword>
<keyword id="KW-0472">Membrane</keyword>
<keyword id="KW-0602">Photosynthesis</keyword>
<keyword id="KW-0604">Photosystem II</keyword>
<keyword id="KW-1185">Reference proteome</keyword>
<keyword id="KW-0793">Thylakoid</keyword>
<keyword id="KW-0812">Transmembrane</keyword>
<keyword id="KW-1133">Transmembrane helix</keyword>
<accession>Q8DIQ0</accession>
<accession>Q9F1M2</accession>